<name>FPGS1_ARATH</name>
<comment type="function">
    <text evidence="2 3 5 6">Catalyzes conversion of folates to polyglutamate derivatives allowing concentration of folate compounds in the cell and the intracellular retention of these cofactors, which are important substrates for most of the folate-dependent enzymes that are involved in one-carbon transfer reactions involved in purine, pyrimidine and amino acid synthesis. Essential for organellar and whole-plant folate homeostasis. Required for postembryonic root development. Generates polyglutamylated folate cofactors to support C1 metabolism required for meristem maintenance and cell expansion during postembryonic root development.</text>
</comment>
<comment type="catalytic activity">
    <reaction evidence="3">
        <text>(6S)-5,6,7,8-tetrahydrofolyl-(gamma-L-Glu)(n) + L-glutamate + ATP = (6S)-5,6,7,8-tetrahydrofolyl-(gamma-L-Glu)(n+1) + ADP + phosphate + H(+)</text>
        <dbReference type="Rhea" id="RHEA:10580"/>
        <dbReference type="Rhea" id="RHEA-COMP:14738"/>
        <dbReference type="Rhea" id="RHEA-COMP:14740"/>
        <dbReference type="ChEBI" id="CHEBI:15378"/>
        <dbReference type="ChEBI" id="CHEBI:29985"/>
        <dbReference type="ChEBI" id="CHEBI:30616"/>
        <dbReference type="ChEBI" id="CHEBI:43474"/>
        <dbReference type="ChEBI" id="CHEBI:141005"/>
        <dbReference type="ChEBI" id="CHEBI:456216"/>
        <dbReference type="EC" id="6.3.2.17"/>
    </reaction>
</comment>
<comment type="cofactor">
    <cofactor evidence="2">
        <name>a monovalent cation</name>
        <dbReference type="ChEBI" id="CHEBI:60242"/>
    </cofactor>
    <text evidence="2">A monovalent cation.</text>
</comment>
<comment type="pathway">
    <text evidence="2">Cofactor biosynthesis; tetrahydrofolylpolyglutamate biosynthesis.</text>
</comment>
<comment type="subcellular location">
    <subcellularLocation>
        <location evidence="3">Plastid</location>
        <location evidence="3">Chloroplast</location>
    </subcellularLocation>
</comment>
<comment type="alternative products">
    <event type="alternative splicing"/>
    <isoform>
        <id>F4K2A1-1</id>
        <name evidence="3 4">1</name>
        <sequence type="displayed"/>
    </isoform>
    <isoform>
        <id>F4K2A1-2</id>
        <name>2</name>
        <sequence type="described" ref="VSP_042087"/>
    </isoform>
</comment>
<comment type="tissue specificity">
    <text evidence="6">Expressed in both shoots and roots, but expression in roots is higher compared with shoots. Distinct expression in the quiescent center (QC) region of the root tip. Also expressed in vascular tissues of the cotyledons and hypocotyls, and the first true leaves of 7 days old seedlings.</text>
</comment>
<comment type="disruption phenotype">
    <text evidence="5 6">Has short primary roots. Root hairs are also short and wavy. Epidermal cells of wild-type roots are two times longer than epidermal cells of the mutant roots. Short primary roots of the mutant are impaired in F-actin organization due to extensive bundling. Reduced primary root growth of mutants indicate defects in both cell division and cell expansion. Total folate content does not significantly change between the wild-type and mutant in either shoots or roots. However, differences in the accumulation patterns of some folate classes, and general changes in the contribution of each folate class to the total folate pool are found. A considerable increase in total monoglutamylated folates in mutant roots when compared with wild-type is found. This difference is not observed in shoots. Total polyglutamylated folate content is not altered in either tissue. Nucleotides and amino acids are generally depleted in mutant. Vegetative phenotype does not differ visually from wild-type. Polyglutamylated folates are still detectable in the disruption mutant. In comparison to wild-type, the plastid and mitochondrial folate levels are reduced by approximately 50 and 25%, respectively. Folate polyglutamylation levels are significantly reduced but not abolished within the respective compartments. Combined loss of FPGS1 and FPGS2 result in embryo lethality. This double mutant has abnormal seeds that are readily distinguishable as albinos which do not proceed beyond the globular stage of embryogenesis. The absence of a developing embryo lead to collapse of seed walls, leaving shrivelled seed reamnants. FPGS1 and FPGS3 double mutant exhibits dwarfed leaves, late flowering (approximately 13 days after wild-type), reduced fecundity and delayed senescence. Pollination with FPGS1 and FPGS3 double mutant pollen yield at most one or two seeds per silique compared to the yield of full siliques when wild-type stigmas are pollinated with wild-type pollen. There is a 40% reduction in the total of 5-CH(3)-THF pool in FPGS1 and FPGS3 double mutant leaf tissue. FPGS1 and FPGS3 double mutants have 70% lower methionine content than wild-type.</text>
</comment>
<comment type="similarity">
    <text evidence="2">Belongs to the folylpolyglutamate synthase family.</text>
</comment>
<comment type="sequence caution" evidence="9">
    <conflict type="erroneous gene model prediction">
        <sequence resource="EMBL-CDS" id="BAB10803"/>
    </conflict>
</comment>
<gene>
    <name evidence="8" type="primary">FPGS1</name>
    <name evidence="7" type="synonym">ATDFB</name>
    <name evidence="10" type="synonym">DFB</name>
    <name evidence="13" type="synonym">FPGS2</name>
    <name evidence="7" type="synonym">FPGSB</name>
    <name type="ordered locus">At5g05980</name>
    <name type="ORF">K18J17.17</name>
</gene>
<dbReference type="EC" id="6.3.2.17" evidence="3"/>
<dbReference type="EMBL" id="AJ250873">
    <property type="protein sequence ID" value="CAC80839.2"/>
    <property type="molecule type" value="mRNA"/>
</dbReference>
<dbReference type="EMBL" id="AB017060">
    <property type="protein sequence ID" value="BAB10803.1"/>
    <property type="status" value="ALT_SEQ"/>
    <property type="molecule type" value="Genomic_DNA"/>
</dbReference>
<dbReference type="EMBL" id="CP002688">
    <property type="protein sequence ID" value="AED90949.1"/>
    <property type="molecule type" value="Genomic_DNA"/>
</dbReference>
<dbReference type="EMBL" id="CP002688">
    <property type="protein sequence ID" value="AED90950.1"/>
    <property type="molecule type" value="Genomic_DNA"/>
</dbReference>
<dbReference type="EMBL" id="AK317446">
    <property type="protein sequence ID" value="BAH20113.1"/>
    <property type="molecule type" value="mRNA"/>
</dbReference>
<dbReference type="RefSeq" id="NP_001031840.1">
    <molecule id="F4K2A1-2"/>
    <property type="nucleotide sequence ID" value="NM_001036763.2"/>
</dbReference>
<dbReference type="RefSeq" id="NP_196217.2">
    <molecule id="F4K2A1-1"/>
    <property type="nucleotide sequence ID" value="NM_120680.3"/>
</dbReference>
<dbReference type="SMR" id="F4K2A1"/>
<dbReference type="FunCoup" id="F4K2A1">
    <property type="interactions" value="3694"/>
</dbReference>
<dbReference type="STRING" id="3702.F4K2A1"/>
<dbReference type="iPTMnet" id="F4K2A1"/>
<dbReference type="PaxDb" id="3702-AT5G05980.1"/>
<dbReference type="ProteomicsDB" id="248552">
    <molecule id="F4K2A1-1"/>
</dbReference>
<dbReference type="EnsemblPlants" id="AT5G05980.1">
    <molecule id="F4K2A1-1"/>
    <property type="protein sequence ID" value="AT5G05980.1"/>
    <property type="gene ID" value="AT5G05980"/>
</dbReference>
<dbReference type="EnsemblPlants" id="AT5G05980.2">
    <molecule id="F4K2A1-2"/>
    <property type="protein sequence ID" value="AT5G05980.2"/>
    <property type="gene ID" value="AT5G05980"/>
</dbReference>
<dbReference type="GeneID" id="830484"/>
<dbReference type="Gramene" id="AT5G05980.1">
    <molecule id="F4K2A1-1"/>
    <property type="protein sequence ID" value="AT5G05980.1"/>
    <property type="gene ID" value="AT5G05980"/>
</dbReference>
<dbReference type="Gramene" id="AT5G05980.2">
    <molecule id="F4K2A1-2"/>
    <property type="protein sequence ID" value="AT5G05980.2"/>
    <property type="gene ID" value="AT5G05980"/>
</dbReference>
<dbReference type="KEGG" id="ath:AT5G05980"/>
<dbReference type="Araport" id="AT5G05980"/>
<dbReference type="TAIR" id="AT5G05980">
    <property type="gene designation" value="DFB"/>
</dbReference>
<dbReference type="eggNOG" id="KOG2525">
    <property type="taxonomic scope" value="Eukaryota"/>
</dbReference>
<dbReference type="InParanoid" id="F4K2A1"/>
<dbReference type="BRENDA" id="6.3.2.17">
    <property type="organism ID" value="399"/>
</dbReference>
<dbReference type="UniPathway" id="UPA00850"/>
<dbReference type="PRO" id="PR:F4K2A1"/>
<dbReference type="Proteomes" id="UP000006548">
    <property type="component" value="Chromosome 5"/>
</dbReference>
<dbReference type="ExpressionAtlas" id="F4K2A1">
    <property type="expression patterns" value="baseline and differential"/>
</dbReference>
<dbReference type="GO" id="GO:0009507">
    <property type="term" value="C:chloroplast"/>
    <property type="evidence" value="ECO:0007669"/>
    <property type="project" value="UniProtKB-SubCell"/>
</dbReference>
<dbReference type="GO" id="GO:0005524">
    <property type="term" value="F:ATP binding"/>
    <property type="evidence" value="ECO:0007669"/>
    <property type="project" value="UniProtKB-KW"/>
</dbReference>
<dbReference type="GO" id="GO:0046872">
    <property type="term" value="F:metal ion binding"/>
    <property type="evidence" value="ECO:0007669"/>
    <property type="project" value="UniProtKB-KW"/>
</dbReference>
<dbReference type="GO" id="GO:0004326">
    <property type="term" value="F:tetrahydrofolylpolyglutamate synthase activity"/>
    <property type="evidence" value="ECO:0000315"/>
    <property type="project" value="TAIR"/>
</dbReference>
<dbReference type="GO" id="GO:0009809">
    <property type="term" value="P:lignin biosynthetic process"/>
    <property type="evidence" value="ECO:0000315"/>
    <property type="project" value="TAIR"/>
</dbReference>
<dbReference type="GO" id="GO:0006730">
    <property type="term" value="P:one-carbon metabolic process"/>
    <property type="evidence" value="ECO:0007669"/>
    <property type="project" value="UniProtKB-KW"/>
</dbReference>
<dbReference type="GO" id="GO:1904961">
    <property type="term" value="P:quiescent center organization"/>
    <property type="evidence" value="ECO:0000315"/>
    <property type="project" value="TAIR"/>
</dbReference>
<dbReference type="GO" id="GO:0048364">
    <property type="term" value="P:root development"/>
    <property type="evidence" value="ECO:0000315"/>
    <property type="project" value="TAIR"/>
</dbReference>
<dbReference type="GO" id="GO:0048767">
    <property type="term" value="P:root hair elongation"/>
    <property type="evidence" value="ECO:0000315"/>
    <property type="project" value="TAIR"/>
</dbReference>
<dbReference type="GO" id="GO:0010449">
    <property type="term" value="P:root meristem growth"/>
    <property type="evidence" value="ECO:0000315"/>
    <property type="project" value="TAIR"/>
</dbReference>
<dbReference type="GO" id="GO:0046901">
    <property type="term" value="P:tetrahydrofolylpolyglutamate biosynthetic process"/>
    <property type="evidence" value="ECO:0000315"/>
    <property type="project" value="TAIR"/>
</dbReference>
<dbReference type="FunFam" id="3.40.1190.10:FF:000008">
    <property type="entry name" value="Folylpolyglutamate synthase"/>
    <property type="match status" value="1"/>
</dbReference>
<dbReference type="FunFam" id="3.90.190.20:FF:000011">
    <property type="entry name" value="Folylpolyglutamate synthase"/>
    <property type="match status" value="1"/>
</dbReference>
<dbReference type="Gene3D" id="3.90.190.20">
    <property type="entry name" value="Mur ligase, C-terminal domain"/>
    <property type="match status" value="1"/>
</dbReference>
<dbReference type="Gene3D" id="3.40.1190.10">
    <property type="entry name" value="Mur-like, catalytic domain"/>
    <property type="match status" value="1"/>
</dbReference>
<dbReference type="InterPro" id="IPR001645">
    <property type="entry name" value="Folylpolyglutamate_synth"/>
</dbReference>
<dbReference type="InterPro" id="IPR018109">
    <property type="entry name" value="Folylpolyglutamate_synth_CS"/>
</dbReference>
<dbReference type="InterPro" id="IPR023600">
    <property type="entry name" value="Folylpolyglutamate_synth_euk"/>
</dbReference>
<dbReference type="InterPro" id="IPR036565">
    <property type="entry name" value="Mur-like_cat_sf"/>
</dbReference>
<dbReference type="InterPro" id="IPR036615">
    <property type="entry name" value="Mur_ligase_C_dom_sf"/>
</dbReference>
<dbReference type="NCBIfam" id="TIGR01499">
    <property type="entry name" value="folC"/>
    <property type="match status" value="1"/>
</dbReference>
<dbReference type="PANTHER" id="PTHR11136:SF16">
    <property type="entry name" value="FOLYLPOLYGLUTAMATE SYNTHASE"/>
    <property type="match status" value="1"/>
</dbReference>
<dbReference type="PANTHER" id="PTHR11136">
    <property type="entry name" value="FOLYLPOLYGLUTAMATE SYNTHASE-RELATED"/>
    <property type="match status" value="1"/>
</dbReference>
<dbReference type="PIRSF" id="PIRSF038895">
    <property type="entry name" value="FPGS"/>
    <property type="match status" value="1"/>
</dbReference>
<dbReference type="SUPFAM" id="SSF53623">
    <property type="entry name" value="MurD-like peptide ligases, catalytic domain"/>
    <property type="match status" value="1"/>
</dbReference>
<dbReference type="SUPFAM" id="SSF53244">
    <property type="entry name" value="MurD-like peptide ligases, peptide-binding domain"/>
    <property type="match status" value="1"/>
</dbReference>
<dbReference type="PROSITE" id="PS01011">
    <property type="entry name" value="FOLYLPOLYGLU_SYNT_1"/>
    <property type="match status" value="1"/>
</dbReference>
<reference evidence="9 13" key="1">
    <citation type="journal article" date="2001" name="Proc. Natl. Acad. Sci. U.S.A.">
        <title>Tetrahydrofolate biosynthesis in plants: molecular and functional characterization of dihydrofolate synthetase and three isoforms of folylpolyglutamate synthetase in Arabidopsis thaliana.</title>
        <authorList>
            <person name="Ravanel S."/>
            <person name="Cherest H."/>
            <person name="Jabrin S."/>
            <person name="Grunwald D."/>
            <person name="Surdin-Kerjan Y."/>
            <person name="Douce R."/>
            <person name="Rebeille F."/>
        </authorList>
    </citation>
    <scope>NUCLEOTIDE SEQUENCE [MRNA] (ISOFORM 1)</scope>
    <scope>FUNCTION</scope>
    <scope>CATALYTIC ACTIVITY</scope>
    <scope>SUBSTRATE SPECIFICITY</scope>
    <scope>SUBCELLULAR LOCATION</scope>
</reference>
<reference evidence="11" key="2">
    <citation type="journal article" date="1999" name="DNA Res.">
        <title>Structural analysis of Arabidopsis thaliana chromosome 5. IX. Sequence features of the regions of 1,011,550 bp covered by seventeen P1 and TAC clones.</title>
        <authorList>
            <person name="Kaneko T."/>
            <person name="Katoh T."/>
            <person name="Sato S."/>
            <person name="Nakamura Y."/>
            <person name="Asamizu E."/>
            <person name="Kotani H."/>
            <person name="Miyajima N."/>
            <person name="Tabata S."/>
        </authorList>
    </citation>
    <scope>NUCLEOTIDE SEQUENCE [LARGE SCALE GENOMIC DNA]</scope>
    <source>
        <strain evidence="11">cv. Columbia</strain>
    </source>
</reference>
<reference evidence="10" key="3">
    <citation type="journal article" date="2017" name="Plant J.">
        <title>Araport11: a complete reannotation of the Arabidopsis thaliana reference genome.</title>
        <authorList>
            <person name="Cheng C.Y."/>
            <person name="Krishnakumar V."/>
            <person name="Chan A.P."/>
            <person name="Thibaud-Nissen F."/>
            <person name="Schobel S."/>
            <person name="Town C.D."/>
        </authorList>
    </citation>
    <scope>GENOME REANNOTATION</scope>
    <source>
        <strain>cv. Columbia</strain>
    </source>
</reference>
<reference evidence="9 12" key="4">
    <citation type="journal article" date="2009" name="DNA Res.">
        <title>Analysis of multiple occurrences of alternative splicing events in Arabidopsis thaliana using novel sequenced full-length cDNAs.</title>
        <authorList>
            <person name="Iida K."/>
            <person name="Fukami-Kobayashi K."/>
            <person name="Toyoda A."/>
            <person name="Sakaki Y."/>
            <person name="Kobayashi M."/>
            <person name="Seki M."/>
            <person name="Shinozaki K."/>
        </authorList>
    </citation>
    <scope>NUCLEOTIDE SEQUENCE [LARGE SCALE MRNA] OF 34-571 (ISOFORM 1)</scope>
    <source>
        <strain evidence="4">cv. Columbia</strain>
        <tissue evidence="12">Rosette leaf</tissue>
    </source>
</reference>
<reference evidence="9" key="5">
    <citation type="journal article" date="2010" name="Plant J.">
        <title>Functional analysis of folate polyglutamylation and its essential role in plant metabolism and development.</title>
        <authorList>
            <person name="Mehrshahi P."/>
            <person name="Gonzalez-Jorge S."/>
            <person name="Akhtar T.A."/>
            <person name="Ward J.L."/>
            <person name="Santoyo-Castelazo A."/>
            <person name="Marcus S.E."/>
            <person name="Lara-Nunez A."/>
            <person name="Ravanel S."/>
            <person name="Hawkins N.D."/>
            <person name="Beale M.H."/>
            <person name="Barrett D.A."/>
            <person name="Knox J.P."/>
            <person name="Gregory J.F. III"/>
            <person name="Hanson A.D."/>
            <person name="Bennett M.J."/>
            <person name="Dellapenna D."/>
        </authorList>
    </citation>
    <scope>FUNCTION</scope>
    <scope>ALTERNATIVE SPLICING</scope>
    <scope>DISRUPTION PHENOTYPE</scope>
</reference>
<reference evidence="9" key="6">
    <citation type="journal article" date="2011" name="Plant Physiol.">
        <title>The folylpolyglutamate synthetase plastidial isoform is required for postembryonic root development in Arabidopsis.</title>
        <authorList>
            <person name="Srivastava A.C."/>
            <person name="Ramos-Parra P.A."/>
            <person name="Bedair M."/>
            <person name="Robledo-Hernandez A.L."/>
            <person name="Tang Y."/>
            <person name="Sumner L.W."/>
            <person name="Diaz de la Garza R.I."/>
            <person name="Blancaflor E.B."/>
        </authorList>
    </citation>
    <scope>FUNCTION</scope>
    <scope>TISSUE SPECIFICITY</scope>
    <scope>DISRUPTION PHENOTYPE</scope>
</reference>
<accession>F4K2A1</accession>
<accession>B9DH96</accession>
<accession>F4K2A2</accession>
<accession>Q8W040</accession>
<accession>Q9FI88</accession>
<protein>
    <recommendedName>
        <fullName evidence="2 13">Folylpolyglutamate synthase</fullName>
        <ecNumber evidence="3">6.3.2.17</ecNumber>
    </recommendedName>
    <alternativeName>
        <fullName evidence="10">DHFS-FPGS homolog B</fullName>
    </alternativeName>
    <alternativeName>
        <fullName evidence="2">Folylpoly-gamma-glutamate synthetase</fullName>
        <shortName evidence="2">FPGS</shortName>
    </alternativeName>
    <alternativeName>
        <fullName evidence="2">Tetrahydrofolylpolyglutamate synthase</fullName>
        <shortName evidence="2">Tetrahydrofolate synthase</shortName>
    </alternativeName>
</protein>
<proteinExistence type="evidence at protein level"/>
<keyword id="KW-0025">Alternative splicing</keyword>
<keyword id="KW-0067">ATP-binding</keyword>
<keyword id="KW-0150">Chloroplast</keyword>
<keyword id="KW-0436">Ligase</keyword>
<keyword id="KW-0460">Magnesium</keyword>
<keyword id="KW-0479">Metal-binding</keyword>
<keyword id="KW-0547">Nucleotide-binding</keyword>
<keyword id="KW-0554">One-carbon metabolism</keyword>
<keyword id="KW-0934">Plastid</keyword>
<keyword id="KW-1185">Reference proteome</keyword>
<evidence type="ECO:0000250" key="1">
    <source>
        <dbReference type="UniProtKB" id="P08192"/>
    </source>
</evidence>
<evidence type="ECO:0000250" key="2">
    <source>
        <dbReference type="UniProtKB" id="Q05932"/>
    </source>
</evidence>
<evidence type="ECO:0000269" key="3">
    <source>
    </source>
</evidence>
<evidence type="ECO:0000269" key="4">
    <source>
    </source>
</evidence>
<evidence type="ECO:0000269" key="5">
    <source>
    </source>
</evidence>
<evidence type="ECO:0000269" key="6">
    <source>
    </source>
</evidence>
<evidence type="ECO:0000303" key="7">
    <source>
    </source>
</evidence>
<evidence type="ECO:0000303" key="8">
    <source>
    </source>
</evidence>
<evidence type="ECO:0000305" key="9"/>
<evidence type="ECO:0000312" key="10">
    <source>
        <dbReference type="EMBL" id="AED90949.1"/>
    </source>
</evidence>
<evidence type="ECO:0000312" key="11">
    <source>
        <dbReference type="EMBL" id="BAB10803.1"/>
    </source>
</evidence>
<evidence type="ECO:0000312" key="12">
    <source>
        <dbReference type="EMBL" id="BAH20113.1"/>
    </source>
</evidence>
<evidence type="ECO:0000312" key="13">
    <source>
        <dbReference type="EMBL" id="CAC80839.2"/>
    </source>
</evidence>
<sequence>MFAVSIVPRTTSCRLSSAFLCQLSIPLTLRLHHHYQHHQPHLPSPLSFQIHSLRKQIDMAAQGGDSYEEALAALSSLITKRSRADKSNKGDRFELVFDYLKLLDLEEDILKMNVIHVAGTKGKGSTCTFTESIIRNYGFRTGLFTSPHLIDVRERFRLDGVDISEEKFLGYFWWCYNRLKERTNEEIPMPTYFRFLALLAFKIFAAEEVDAAILEVGLGGKFDATNAVQKPVVCGISSLGYDHMEILGDTLGKIAGEKAGIFKLGVPAFTVPQPDEAMRVLEEKASETEVNLEVVQPLTARLLSGQKLGLDGEHQYVNAGLAVSLASIWLQQIGKLEVPSRTQMSILPEKFIKGLATASLQGRAQVVPDQYTESRTSGDLVFYLDGAHSPESMEACAKWFSVAVKGDNQSGSSGHLVNGSAGSSHDKWSNETCEQILLFNCMSVRDPNLLLPHLKNMCAKYGVNFKKALFVPNMSVYHKVGTAADLPENDPQVDLSWQFTLQKVWESLVQSERDGEKDGESDGNSEVFTSLPMAIKCLRDTVHESSSATRFQVLVTGSLHLVGDVLRLIRK</sequence>
<feature type="chain" id="PRO_0000414485" description="Folylpolyglutamate synthase">
    <location>
        <begin position="1"/>
        <end position="571"/>
    </location>
</feature>
<feature type="binding site" evidence="1">
    <location>
        <begin position="122"/>
        <end position="125"/>
    </location>
    <ligand>
        <name>ATP</name>
        <dbReference type="ChEBI" id="CHEBI:30616"/>
    </ligand>
</feature>
<feature type="binding site" evidence="1">
    <location>
        <position position="146"/>
    </location>
    <ligand>
        <name>Mg(2+)</name>
        <dbReference type="ChEBI" id="CHEBI:18420"/>
        <label>1</label>
    </ligand>
</feature>
<feature type="binding site" evidence="1">
    <location>
        <position position="215"/>
    </location>
    <ligand>
        <name>Mg(2+)</name>
        <dbReference type="ChEBI" id="CHEBI:18420"/>
        <label>1</label>
    </ligand>
</feature>
<feature type="binding site" evidence="1">
    <location>
        <position position="243"/>
    </location>
    <ligand>
        <name>Mg(2+)</name>
        <dbReference type="ChEBI" id="CHEBI:18420"/>
        <label>2</label>
    </ligand>
</feature>
<feature type="binding site" evidence="1">
    <location>
        <position position="363"/>
    </location>
    <ligand>
        <name>ATP</name>
        <dbReference type="ChEBI" id="CHEBI:30616"/>
    </ligand>
</feature>
<feature type="binding site" evidence="1">
    <location>
        <position position="385"/>
    </location>
    <ligand>
        <name>ATP</name>
        <dbReference type="ChEBI" id="CHEBI:30616"/>
    </ligand>
</feature>
<feature type="splice variant" id="VSP_042087" description="In isoform 2." evidence="9">
    <location>
        <begin position="1"/>
        <end position="58"/>
    </location>
</feature>
<feature type="sequence conflict" description="In Ref. 1; CAC80839." evidence="9" ref="1">
    <original>Q</original>
    <variation>H</variation>
    <location>
        <position position="229"/>
    </location>
</feature>
<organism>
    <name type="scientific">Arabidopsis thaliana</name>
    <name type="common">Mouse-ear cress</name>
    <dbReference type="NCBI Taxonomy" id="3702"/>
    <lineage>
        <taxon>Eukaryota</taxon>
        <taxon>Viridiplantae</taxon>
        <taxon>Streptophyta</taxon>
        <taxon>Embryophyta</taxon>
        <taxon>Tracheophyta</taxon>
        <taxon>Spermatophyta</taxon>
        <taxon>Magnoliopsida</taxon>
        <taxon>eudicotyledons</taxon>
        <taxon>Gunneridae</taxon>
        <taxon>Pentapetalae</taxon>
        <taxon>rosids</taxon>
        <taxon>malvids</taxon>
        <taxon>Brassicales</taxon>
        <taxon>Brassicaceae</taxon>
        <taxon>Camelineae</taxon>
        <taxon>Arabidopsis</taxon>
    </lineage>
</organism>